<dbReference type="EMBL" id="AY561508">
    <property type="protein sequence ID" value="AAS66961.1"/>
    <property type="molecule type" value="mRNA"/>
</dbReference>
<dbReference type="EMBL" id="BX276180">
    <property type="protein sequence ID" value="CAH68965.1"/>
    <property type="molecule type" value="Genomic_DNA"/>
</dbReference>
<dbReference type="EMBL" id="BC059562">
    <property type="protein sequence ID" value="AAH59562.1"/>
    <property type="molecule type" value="mRNA"/>
</dbReference>
<dbReference type="RefSeq" id="NP_957046.1">
    <property type="nucleotide sequence ID" value="NM_200752.1"/>
</dbReference>
<dbReference type="PDB" id="7OYA">
    <property type="method" value="EM"/>
    <property type="resolution" value="3.20 A"/>
    <property type="chains" value="H2=1-194"/>
</dbReference>
<dbReference type="PDB" id="7OYB">
    <property type="method" value="EM"/>
    <property type="resolution" value="2.40 A"/>
    <property type="chains" value="H2=1-194"/>
</dbReference>
<dbReference type="PDBsum" id="7OYA"/>
<dbReference type="PDBsum" id="7OYB"/>
<dbReference type="EMDB" id="EMD-13111"/>
<dbReference type="EMDB" id="EMD-13112"/>
<dbReference type="SMR" id="P62084"/>
<dbReference type="FunCoup" id="P62084">
    <property type="interactions" value="2481"/>
</dbReference>
<dbReference type="STRING" id="7955.ENSDARP00000109497"/>
<dbReference type="PaxDb" id="7955-ENSDARP00000109497"/>
<dbReference type="Ensembl" id="ENSDART00000126229">
    <property type="protein sequence ID" value="ENSDARP00000109497"/>
    <property type="gene ID" value="ENSDARG00000042566"/>
</dbReference>
<dbReference type="Ensembl" id="ENSDART00000190737">
    <property type="protein sequence ID" value="ENSDARP00000150273"/>
    <property type="gene ID" value="ENSDARG00000042566"/>
</dbReference>
<dbReference type="GeneID" id="393725"/>
<dbReference type="KEGG" id="dre:393725"/>
<dbReference type="AGR" id="ZFIN:ZDB-GENE-040426-1718"/>
<dbReference type="CTD" id="6201"/>
<dbReference type="ZFIN" id="ZDB-GENE-040426-1718">
    <property type="gene designation" value="rps7"/>
</dbReference>
<dbReference type="eggNOG" id="KOG3320">
    <property type="taxonomic scope" value="Eukaryota"/>
</dbReference>
<dbReference type="HOGENOM" id="CLU_088621_1_2_1"/>
<dbReference type="InParanoid" id="P62084"/>
<dbReference type="OMA" id="AAYHKVQ"/>
<dbReference type="OrthoDB" id="1724687at2759"/>
<dbReference type="PhylomeDB" id="P62084"/>
<dbReference type="TreeFam" id="TF343364"/>
<dbReference type="Reactome" id="R-DRE-156827">
    <property type="pathway name" value="L13a-mediated translational silencing of Ceruloplasmin expression"/>
</dbReference>
<dbReference type="Reactome" id="R-DRE-1799339">
    <property type="pathway name" value="SRP-dependent cotranslational protein targeting to membrane"/>
</dbReference>
<dbReference type="Reactome" id="R-DRE-72689">
    <property type="pathway name" value="Formation of a pool of free 40S subunits"/>
</dbReference>
<dbReference type="Reactome" id="R-DRE-72695">
    <property type="pathway name" value="Formation of the ternary complex, and subsequently, the 43S complex"/>
</dbReference>
<dbReference type="Reactome" id="R-DRE-72702">
    <property type="pathway name" value="Ribosomal scanning and start codon recognition"/>
</dbReference>
<dbReference type="Reactome" id="R-DRE-975956">
    <property type="pathway name" value="Nonsense Mediated Decay (NMD) independent of the Exon Junction Complex (EJC)"/>
</dbReference>
<dbReference type="Reactome" id="R-DRE-975957">
    <property type="pathway name" value="Nonsense Mediated Decay (NMD) enhanced by the Exon Junction Complex (EJC)"/>
</dbReference>
<dbReference type="PRO" id="PR:P62084"/>
<dbReference type="Proteomes" id="UP000000437">
    <property type="component" value="Chromosome 20"/>
</dbReference>
<dbReference type="Bgee" id="ENSDARG00000042566">
    <property type="expression patterns" value="Expressed in tail bud paraxial mesoderm and 27 other cell types or tissues"/>
</dbReference>
<dbReference type="GO" id="GO:0005813">
    <property type="term" value="C:centrosome"/>
    <property type="evidence" value="ECO:0007669"/>
    <property type="project" value="UniProtKB-SubCell"/>
</dbReference>
<dbReference type="GO" id="GO:0022627">
    <property type="term" value="C:cytosolic small ribosomal subunit"/>
    <property type="evidence" value="ECO:0000318"/>
    <property type="project" value="GO_Central"/>
</dbReference>
<dbReference type="GO" id="GO:0005634">
    <property type="term" value="C:nucleus"/>
    <property type="evidence" value="ECO:0007669"/>
    <property type="project" value="UniProtKB-SubCell"/>
</dbReference>
<dbReference type="GO" id="GO:0032040">
    <property type="term" value="C:small-subunit processome"/>
    <property type="evidence" value="ECO:0000318"/>
    <property type="project" value="GO_Central"/>
</dbReference>
<dbReference type="GO" id="GO:0003735">
    <property type="term" value="F:structural constituent of ribosome"/>
    <property type="evidence" value="ECO:0007669"/>
    <property type="project" value="InterPro"/>
</dbReference>
<dbReference type="GO" id="GO:0043009">
    <property type="term" value="P:chordate embryonic development"/>
    <property type="evidence" value="ECO:0000315"/>
    <property type="project" value="ZFIN"/>
</dbReference>
<dbReference type="GO" id="GO:0030097">
    <property type="term" value="P:hemopoiesis"/>
    <property type="evidence" value="ECO:0000315"/>
    <property type="project" value="ZFIN"/>
</dbReference>
<dbReference type="GO" id="GO:0051726">
    <property type="term" value="P:regulation of cell cycle"/>
    <property type="evidence" value="ECO:0000315"/>
    <property type="project" value="ZFIN"/>
</dbReference>
<dbReference type="GO" id="GO:0042274">
    <property type="term" value="P:ribosomal small subunit biogenesis"/>
    <property type="evidence" value="ECO:0000318"/>
    <property type="project" value="GO_Central"/>
</dbReference>
<dbReference type="GO" id="GO:0006364">
    <property type="term" value="P:rRNA processing"/>
    <property type="evidence" value="ECO:0000318"/>
    <property type="project" value="GO_Central"/>
</dbReference>
<dbReference type="GO" id="GO:0006412">
    <property type="term" value="P:translation"/>
    <property type="evidence" value="ECO:0007669"/>
    <property type="project" value="InterPro"/>
</dbReference>
<dbReference type="InterPro" id="IPR000554">
    <property type="entry name" value="Ribosomal_eS7"/>
</dbReference>
<dbReference type="InterPro" id="IPR047861">
    <property type="entry name" value="Ribosomal_eS7_CS"/>
</dbReference>
<dbReference type="PANTHER" id="PTHR11278">
    <property type="entry name" value="40S RIBOSOMAL PROTEIN S7"/>
    <property type="match status" value="1"/>
</dbReference>
<dbReference type="PANTHER" id="PTHR11278:SF0">
    <property type="entry name" value="SMALL RIBOSOMAL SUBUNIT PROTEIN ES7"/>
    <property type="match status" value="1"/>
</dbReference>
<dbReference type="Pfam" id="PF01251">
    <property type="entry name" value="Ribosomal_S7e"/>
    <property type="match status" value="1"/>
</dbReference>
<dbReference type="PROSITE" id="PS00948">
    <property type="entry name" value="RIBOSOMAL_S7E"/>
    <property type="match status" value="1"/>
</dbReference>
<accession>P62084</accession>
<feature type="chain" id="PRO_0000174193" description="Small ribosomal subunit protein eS7">
    <location>
        <begin position="1"/>
        <end position="194"/>
    </location>
</feature>
<organism>
    <name type="scientific">Danio rerio</name>
    <name type="common">Zebrafish</name>
    <name type="synonym">Brachydanio rerio</name>
    <dbReference type="NCBI Taxonomy" id="7955"/>
    <lineage>
        <taxon>Eukaryota</taxon>
        <taxon>Metazoa</taxon>
        <taxon>Chordata</taxon>
        <taxon>Craniata</taxon>
        <taxon>Vertebrata</taxon>
        <taxon>Euteleostomi</taxon>
        <taxon>Actinopterygii</taxon>
        <taxon>Neopterygii</taxon>
        <taxon>Teleostei</taxon>
        <taxon>Ostariophysi</taxon>
        <taxon>Cypriniformes</taxon>
        <taxon>Danionidae</taxon>
        <taxon>Danioninae</taxon>
        <taxon>Danio</taxon>
    </lineage>
</organism>
<sequence>MFSTSAKIVKPNGEKPDEFESGISQALLELEMNSDLKAQLRELHITAAKEIEVGGSRKAIIIFVPVPQLKSFQKIQVRLVRELEKKFSGKHVVFIAQRRILPKPTRKSRTKNKQKRPRSRTLTNVHDAILEDLVFPSEIVGKRIRVKLDSSRLIKVHLDKAQQNNVEHKVETFAGVYKKLTGKDVIFEFPEFQL</sequence>
<comment type="function">
    <text evidence="1">Component of the small ribosomal subunit. The ribosome is a large ribonucleoprotein complex responsible for the synthesis of proteins in the cell. Required for rRNA maturation.</text>
</comment>
<comment type="subunit">
    <text evidence="1">Component of the small ribosomal subunit.</text>
</comment>
<comment type="subcellular location">
    <subcellularLocation>
        <location evidence="1">Cytoplasm</location>
        <location evidence="1">Cytoskeleton</location>
        <location evidence="1">Microtubule organizing center</location>
        <location evidence="1">Centrosome</location>
    </subcellularLocation>
    <subcellularLocation>
        <location evidence="1">Cytoplasm</location>
    </subcellularLocation>
    <subcellularLocation>
        <location evidence="1">Nucleus</location>
    </subcellularLocation>
</comment>
<comment type="similarity">
    <text evidence="2">Belongs to the eukaryotic ribosomal protein eS7 family.</text>
</comment>
<evidence type="ECO:0000250" key="1">
    <source>
        <dbReference type="UniProtKB" id="P62081"/>
    </source>
</evidence>
<evidence type="ECO:0000305" key="2"/>
<keyword id="KW-0002">3D-structure</keyword>
<keyword id="KW-0963">Cytoplasm</keyword>
<keyword id="KW-0206">Cytoskeleton</keyword>
<keyword id="KW-0539">Nucleus</keyword>
<keyword id="KW-1185">Reference proteome</keyword>
<keyword id="KW-0687">Ribonucleoprotein</keyword>
<keyword id="KW-0689">Ribosomal protein</keyword>
<reference key="1">
    <citation type="journal article" date="2004" name="PLoS Biol.">
        <title>Many ribosomal protein genes are cancer genes in zebrafish.</title>
        <authorList>
            <person name="Amsterdam A."/>
            <person name="Sadler K.C."/>
            <person name="Lai K."/>
            <person name="Farrington S."/>
            <person name="Bronson R.T."/>
            <person name="Lees J.A."/>
            <person name="Hopkins N."/>
        </authorList>
    </citation>
    <scope>NUCLEOTIDE SEQUENCE [MRNA]</scope>
</reference>
<reference key="2">
    <citation type="journal article" date="2013" name="Nature">
        <title>The zebrafish reference genome sequence and its relationship to the human genome.</title>
        <authorList>
            <person name="Howe K."/>
            <person name="Clark M.D."/>
            <person name="Torroja C.F."/>
            <person name="Torrance J."/>
            <person name="Berthelot C."/>
            <person name="Muffato M."/>
            <person name="Collins J.E."/>
            <person name="Humphray S."/>
            <person name="McLaren K."/>
            <person name="Matthews L."/>
            <person name="McLaren S."/>
            <person name="Sealy I."/>
            <person name="Caccamo M."/>
            <person name="Churcher C."/>
            <person name="Scott C."/>
            <person name="Barrett J.C."/>
            <person name="Koch R."/>
            <person name="Rauch G.J."/>
            <person name="White S."/>
            <person name="Chow W."/>
            <person name="Kilian B."/>
            <person name="Quintais L.T."/>
            <person name="Guerra-Assuncao J.A."/>
            <person name="Zhou Y."/>
            <person name="Gu Y."/>
            <person name="Yen J."/>
            <person name="Vogel J.H."/>
            <person name="Eyre T."/>
            <person name="Redmond S."/>
            <person name="Banerjee R."/>
            <person name="Chi J."/>
            <person name="Fu B."/>
            <person name="Langley E."/>
            <person name="Maguire S.F."/>
            <person name="Laird G.K."/>
            <person name="Lloyd D."/>
            <person name="Kenyon E."/>
            <person name="Donaldson S."/>
            <person name="Sehra H."/>
            <person name="Almeida-King J."/>
            <person name="Loveland J."/>
            <person name="Trevanion S."/>
            <person name="Jones M."/>
            <person name="Quail M."/>
            <person name="Willey D."/>
            <person name="Hunt A."/>
            <person name="Burton J."/>
            <person name="Sims S."/>
            <person name="McLay K."/>
            <person name="Plumb B."/>
            <person name="Davis J."/>
            <person name="Clee C."/>
            <person name="Oliver K."/>
            <person name="Clark R."/>
            <person name="Riddle C."/>
            <person name="Elliot D."/>
            <person name="Threadgold G."/>
            <person name="Harden G."/>
            <person name="Ware D."/>
            <person name="Begum S."/>
            <person name="Mortimore B."/>
            <person name="Kerry G."/>
            <person name="Heath P."/>
            <person name="Phillimore B."/>
            <person name="Tracey A."/>
            <person name="Corby N."/>
            <person name="Dunn M."/>
            <person name="Johnson C."/>
            <person name="Wood J."/>
            <person name="Clark S."/>
            <person name="Pelan S."/>
            <person name="Griffiths G."/>
            <person name="Smith M."/>
            <person name="Glithero R."/>
            <person name="Howden P."/>
            <person name="Barker N."/>
            <person name="Lloyd C."/>
            <person name="Stevens C."/>
            <person name="Harley J."/>
            <person name="Holt K."/>
            <person name="Panagiotidis G."/>
            <person name="Lovell J."/>
            <person name="Beasley H."/>
            <person name="Henderson C."/>
            <person name="Gordon D."/>
            <person name="Auger K."/>
            <person name="Wright D."/>
            <person name="Collins J."/>
            <person name="Raisen C."/>
            <person name="Dyer L."/>
            <person name="Leung K."/>
            <person name="Robertson L."/>
            <person name="Ambridge K."/>
            <person name="Leongamornlert D."/>
            <person name="McGuire S."/>
            <person name="Gilderthorp R."/>
            <person name="Griffiths C."/>
            <person name="Manthravadi D."/>
            <person name="Nichol S."/>
            <person name="Barker G."/>
            <person name="Whitehead S."/>
            <person name="Kay M."/>
            <person name="Brown J."/>
            <person name="Murnane C."/>
            <person name="Gray E."/>
            <person name="Humphries M."/>
            <person name="Sycamore N."/>
            <person name="Barker D."/>
            <person name="Saunders D."/>
            <person name="Wallis J."/>
            <person name="Babbage A."/>
            <person name="Hammond S."/>
            <person name="Mashreghi-Mohammadi M."/>
            <person name="Barr L."/>
            <person name="Martin S."/>
            <person name="Wray P."/>
            <person name="Ellington A."/>
            <person name="Matthews N."/>
            <person name="Ellwood M."/>
            <person name="Woodmansey R."/>
            <person name="Clark G."/>
            <person name="Cooper J."/>
            <person name="Tromans A."/>
            <person name="Grafham D."/>
            <person name="Skuce C."/>
            <person name="Pandian R."/>
            <person name="Andrews R."/>
            <person name="Harrison E."/>
            <person name="Kimberley A."/>
            <person name="Garnett J."/>
            <person name="Fosker N."/>
            <person name="Hall R."/>
            <person name="Garner P."/>
            <person name="Kelly D."/>
            <person name="Bird C."/>
            <person name="Palmer S."/>
            <person name="Gehring I."/>
            <person name="Berger A."/>
            <person name="Dooley C.M."/>
            <person name="Ersan-Urun Z."/>
            <person name="Eser C."/>
            <person name="Geiger H."/>
            <person name="Geisler M."/>
            <person name="Karotki L."/>
            <person name="Kirn A."/>
            <person name="Konantz J."/>
            <person name="Konantz M."/>
            <person name="Oberlander M."/>
            <person name="Rudolph-Geiger S."/>
            <person name="Teucke M."/>
            <person name="Lanz C."/>
            <person name="Raddatz G."/>
            <person name="Osoegawa K."/>
            <person name="Zhu B."/>
            <person name="Rapp A."/>
            <person name="Widaa S."/>
            <person name="Langford C."/>
            <person name="Yang F."/>
            <person name="Schuster S.C."/>
            <person name="Carter N.P."/>
            <person name="Harrow J."/>
            <person name="Ning Z."/>
            <person name="Herrero J."/>
            <person name="Searle S.M."/>
            <person name="Enright A."/>
            <person name="Geisler R."/>
            <person name="Plasterk R.H."/>
            <person name="Lee C."/>
            <person name="Westerfield M."/>
            <person name="de Jong P.J."/>
            <person name="Zon L.I."/>
            <person name="Postlethwait J.H."/>
            <person name="Nusslein-Volhard C."/>
            <person name="Hubbard T.J."/>
            <person name="Roest Crollius H."/>
            <person name="Rogers J."/>
            <person name="Stemple D.L."/>
        </authorList>
    </citation>
    <scope>NUCLEOTIDE SEQUENCE [LARGE SCALE GENOMIC DNA]</scope>
    <source>
        <strain>Tuebingen</strain>
    </source>
</reference>
<reference key="3">
    <citation type="submission" date="2003-10" db="EMBL/GenBank/DDBJ databases">
        <authorList>
            <consortium name="NIH - Zebrafish Gene Collection (ZGC) project"/>
        </authorList>
    </citation>
    <scope>NUCLEOTIDE SEQUENCE [LARGE SCALE MRNA]</scope>
    <source>
        <tissue>Retina</tissue>
    </source>
</reference>
<gene>
    <name type="primary">rps7</name>
    <name type="ORF">zgc:73216</name>
</gene>
<protein>
    <recommendedName>
        <fullName evidence="2">Small ribosomal subunit protein eS7</fullName>
    </recommendedName>
    <alternativeName>
        <fullName>40S ribosomal protein S7</fullName>
    </alternativeName>
</protein>
<name>RS7_DANRE</name>
<proteinExistence type="evidence at protein level"/>